<organism>
    <name type="scientific">Synechococcus elongatus (strain ATCC 33912 / PCC 7942 / FACHB-805)</name>
    <name type="common">Anacystis nidulans R2</name>
    <dbReference type="NCBI Taxonomy" id="1140"/>
    <lineage>
        <taxon>Bacteria</taxon>
        <taxon>Bacillati</taxon>
        <taxon>Cyanobacteriota</taxon>
        <taxon>Cyanophyceae</taxon>
        <taxon>Synechococcales</taxon>
        <taxon>Synechococcaceae</taxon>
        <taxon>Synechococcus</taxon>
    </lineage>
</organism>
<evidence type="ECO:0000250" key="1"/>
<evidence type="ECO:0000305" key="2"/>
<comment type="catalytic activity">
    <reaction>
        <text>GTP + H2O = 7,8-dihydroneopterin 3'-triphosphate + formate + H(+)</text>
        <dbReference type="Rhea" id="RHEA:17473"/>
        <dbReference type="ChEBI" id="CHEBI:15377"/>
        <dbReference type="ChEBI" id="CHEBI:15378"/>
        <dbReference type="ChEBI" id="CHEBI:15740"/>
        <dbReference type="ChEBI" id="CHEBI:37565"/>
        <dbReference type="ChEBI" id="CHEBI:58462"/>
        <dbReference type="EC" id="3.5.4.16"/>
    </reaction>
</comment>
<comment type="pathway">
    <text>Cofactor biosynthesis; 7,8-dihydroneopterin triphosphate biosynthesis; 7,8-dihydroneopterin triphosphate from GTP: step 1/1.</text>
</comment>
<comment type="subunit">
    <text evidence="1">Toroid-shaped homodecamer, composed of two pentamers of five dimers.</text>
</comment>
<comment type="similarity">
    <text evidence="2">Belongs to the GTP cyclohydrolase I family.</text>
</comment>
<comment type="sequence caution" evidence="2">
    <conflict type="erroneous initiation">
        <sequence resource="EMBL-CDS" id="AAB82043"/>
    </conflict>
</comment>
<comment type="sequence caution" evidence="2">
    <conflict type="erroneous initiation">
        <sequence resource="EMBL-CDS" id="AAM82644"/>
    </conflict>
</comment>
<dbReference type="EC" id="3.5.4.16"/>
<dbReference type="EMBL" id="U59236">
    <property type="protein sequence ID" value="AAB82043.1"/>
    <property type="status" value="ALT_INIT"/>
    <property type="molecule type" value="Genomic_DNA"/>
</dbReference>
<dbReference type="EMBL" id="AY120852">
    <property type="protein sequence ID" value="AAM82644.1"/>
    <property type="status" value="ALT_INIT"/>
    <property type="molecule type" value="Genomic_DNA"/>
</dbReference>
<dbReference type="EMBL" id="CP000100">
    <property type="protein sequence ID" value="ABB57627.1"/>
    <property type="molecule type" value="Genomic_DNA"/>
</dbReference>
<dbReference type="RefSeq" id="WP_011242367.1">
    <property type="nucleotide sequence ID" value="NZ_CP130602.1"/>
</dbReference>
<dbReference type="SMR" id="Q54769"/>
<dbReference type="STRING" id="1140.Synpcc7942_1597"/>
<dbReference type="PaxDb" id="1140-Synpcc7942_1597"/>
<dbReference type="KEGG" id="syf:Synpcc7942_1597"/>
<dbReference type="eggNOG" id="COG0302">
    <property type="taxonomic scope" value="Bacteria"/>
</dbReference>
<dbReference type="HOGENOM" id="CLU_049768_2_2_3"/>
<dbReference type="OrthoDB" id="9801207at2"/>
<dbReference type="BioCyc" id="SYNEL:SYNPCC7942_1597-MONOMER"/>
<dbReference type="UniPathway" id="UPA00848">
    <property type="reaction ID" value="UER00151"/>
</dbReference>
<dbReference type="Proteomes" id="UP000889800">
    <property type="component" value="Chromosome"/>
</dbReference>
<dbReference type="GO" id="GO:0005737">
    <property type="term" value="C:cytoplasm"/>
    <property type="evidence" value="ECO:0007669"/>
    <property type="project" value="TreeGrafter"/>
</dbReference>
<dbReference type="GO" id="GO:0005525">
    <property type="term" value="F:GTP binding"/>
    <property type="evidence" value="ECO:0007669"/>
    <property type="project" value="UniProtKB-KW"/>
</dbReference>
<dbReference type="GO" id="GO:0003934">
    <property type="term" value="F:GTP cyclohydrolase I activity"/>
    <property type="evidence" value="ECO:0007669"/>
    <property type="project" value="UniProtKB-UniRule"/>
</dbReference>
<dbReference type="GO" id="GO:0008270">
    <property type="term" value="F:zinc ion binding"/>
    <property type="evidence" value="ECO:0007669"/>
    <property type="project" value="UniProtKB-UniRule"/>
</dbReference>
<dbReference type="GO" id="GO:0006730">
    <property type="term" value="P:one-carbon metabolic process"/>
    <property type="evidence" value="ECO:0007669"/>
    <property type="project" value="UniProtKB-UniRule"/>
</dbReference>
<dbReference type="GO" id="GO:0006729">
    <property type="term" value="P:tetrahydrobiopterin biosynthetic process"/>
    <property type="evidence" value="ECO:0007669"/>
    <property type="project" value="TreeGrafter"/>
</dbReference>
<dbReference type="GO" id="GO:0046654">
    <property type="term" value="P:tetrahydrofolate biosynthetic process"/>
    <property type="evidence" value="ECO:0007669"/>
    <property type="project" value="UniProtKB-UniRule"/>
</dbReference>
<dbReference type="CDD" id="cd00642">
    <property type="entry name" value="GTP_cyclohydro1"/>
    <property type="match status" value="1"/>
</dbReference>
<dbReference type="FunFam" id="3.30.1130.10:FF:000012">
    <property type="entry name" value="GTP cyclohydrolase 1"/>
    <property type="match status" value="1"/>
</dbReference>
<dbReference type="Gene3D" id="1.10.286.10">
    <property type="match status" value="1"/>
</dbReference>
<dbReference type="Gene3D" id="3.30.1130.10">
    <property type="match status" value="1"/>
</dbReference>
<dbReference type="HAMAP" id="MF_00223">
    <property type="entry name" value="FolE"/>
    <property type="match status" value="1"/>
</dbReference>
<dbReference type="InterPro" id="IPR043133">
    <property type="entry name" value="GTP-CH-I_C/QueF"/>
</dbReference>
<dbReference type="InterPro" id="IPR043134">
    <property type="entry name" value="GTP-CH-I_N"/>
</dbReference>
<dbReference type="InterPro" id="IPR001474">
    <property type="entry name" value="GTP_CycHdrlase_I"/>
</dbReference>
<dbReference type="InterPro" id="IPR018234">
    <property type="entry name" value="GTP_CycHdrlase_I_CS"/>
</dbReference>
<dbReference type="InterPro" id="IPR020602">
    <property type="entry name" value="GTP_CycHdrlase_I_dom"/>
</dbReference>
<dbReference type="NCBIfam" id="TIGR00063">
    <property type="entry name" value="folE"/>
    <property type="match status" value="1"/>
</dbReference>
<dbReference type="NCBIfam" id="NF006825">
    <property type="entry name" value="PRK09347.1-2"/>
    <property type="match status" value="1"/>
</dbReference>
<dbReference type="NCBIfam" id="NF006826">
    <property type="entry name" value="PRK09347.1-3"/>
    <property type="match status" value="1"/>
</dbReference>
<dbReference type="PANTHER" id="PTHR11109:SF7">
    <property type="entry name" value="GTP CYCLOHYDROLASE 1"/>
    <property type="match status" value="1"/>
</dbReference>
<dbReference type="PANTHER" id="PTHR11109">
    <property type="entry name" value="GTP CYCLOHYDROLASE I"/>
    <property type="match status" value="1"/>
</dbReference>
<dbReference type="Pfam" id="PF01227">
    <property type="entry name" value="GTP_cyclohydroI"/>
    <property type="match status" value="1"/>
</dbReference>
<dbReference type="SUPFAM" id="SSF55620">
    <property type="entry name" value="Tetrahydrobiopterin biosynthesis enzymes-like"/>
    <property type="match status" value="1"/>
</dbReference>
<dbReference type="PROSITE" id="PS00859">
    <property type="entry name" value="GTP_CYCLOHYDROL_1_1"/>
    <property type="match status" value="1"/>
</dbReference>
<dbReference type="PROSITE" id="PS00860">
    <property type="entry name" value="GTP_CYCLOHYDROL_1_2"/>
    <property type="match status" value="1"/>
</dbReference>
<accession>Q54769</accession>
<accession>Q31MU2</accession>
<accession>Q8KPT2</accession>
<reference key="1">
    <citation type="submission" date="1996-05" db="EMBL/GenBank/DDBJ databases">
        <title>Genes encoding the alpha subunit of carboxyltransferase of the acetyl-CoA carboxylase complex and GTP cyclohydrolase I from cyanobacterium Synechococcus sp. PCC 7942.</title>
        <authorList>
            <person name="Phung L.T."/>
            <person name="Haselkorn R."/>
        </authorList>
    </citation>
    <scope>NUCLEOTIDE SEQUENCE [GENOMIC DNA]</scope>
</reference>
<reference key="2">
    <citation type="submission" date="2002-06" db="EMBL/GenBank/DDBJ databases">
        <title>Synechococcus elongatus PCC7942 cosmid 6C3.</title>
        <authorList>
            <person name="Holtman C.K."/>
            <person name="Sandoval P."/>
            <person name="Chen Y."/>
            <person name="Socias T."/>
            <person name="Mohler B.J."/>
            <person name="Gonzalez A."/>
            <person name="Salinas I."/>
            <person name="McMurtry S."/>
            <person name="Golden S.S."/>
            <person name="Youderian P."/>
        </authorList>
    </citation>
    <scope>NUCLEOTIDE SEQUENCE [GENOMIC DNA]</scope>
</reference>
<reference key="3">
    <citation type="submission" date="2005-08" db="EMBL/GenBank/DDBJ databases">
        <title>Complete sequence of chromosome 1 of Synechococcus elongatus PCC 7942.</title>
        <authorList>
            <consortium name="US DOE Joint Genome Institute"/>
            <person name="Copeland A."/>
            <person name="Lucas S."/>
            <person name="Lapidus A."/>
            <person name="Barry K."/>
            <person name="Detter J.C."/>
            <person name="Glavina T."/>
            <person name="Hammon N."/>
            <person name="Israni S."/>
            <person name="Pitluck S."/>
            <person name="Schmutz J."/>
            <person name="Larimer F."/>
            <person name="Land M."/>
            <person name="Kyrpides N."/>
            <person name="Lykidis A."/>
            <person name="Golden S."/>
            <person name="Richardson P."/>
        </authorList>
    </citation>
    <scope>NUCLEOTIDE SEQUENCE [LARGE SCALE GENOMIC DNA]</scope>
    <source>
        <strain>ATCC 33912 / PCC 7942 / FACHB-805</strain>
    </source>
</reference>
<protein>
    <recommendedName>
        <fullName>GTP cyclohydrolase 1</fullName>
        <ecNumber>3.5.4.16</ecNumber>
    </recommendedName>
    <alternativeName>
        <fullName>GTP cyclohydrolase I</fullName>
        <shortName>GTP-CH-I</shortName>
    </alternativeName>
</protein>
<keyword id="KW-0342">GTP-binding</keyword>
<keyword id="KW-0378">Hydrolase</keyword>
<keyword id="KW-0479">Metal-binding</keyword>
<keyword id="KW-0547">Nucleotide-binding</keyword>
<keyword id="KW-0554">One-carbon metabolism</keyword>
<keyword id="KW-1185">Reference proteome</keyword>
<keyword id="KW-0862">Zinc</keyword>
<gene>
    <name type="primary">folE</name>
    <name type="ordered locus">Synpcc7942_1597</name>
    <name type="ORF">sec0031</name>
</gene>
<sequence length="213" mass="23715">MTSPSLNGSNSLVDAIRPETEAVSQAEMEAAVRTLLLGVGEDPEREGLLKTPKRVAEAYRFLTSGYSQSLDDLVNGAIFDEGHNEMVLVRDITAFSLCEHHMLPFMGKVHVAYIPNQKVVGLSKLARIVEMYSRRLQVQERLTRQIAESVQEILDPQGVAVVMEATHMCMVMRGVQKPGSWTVTSAMVGVFQEDQRTREEFLSLIRHQPAAFA</sequence>
<feature type="chain" id="PRO_0000119457" description="GTP cyclohydrolase 1">
    <location>
        <begin position="1"/>
        <end position="213"/>
    </location>
</feature>
<feature type="binding site" evidence="1">
    <location>
        <position position="98"/>
    </location>
    <ligand>
        <name>Zn(2+)</name>
        <dbReference type="ChEBI" id="CHEBI:29105"/>
    </ligand>
</feature>
<feature type="binding site" evidence="1">
    <location>
        <position position="101"/>
    </location>
    <ligand>
        <name>Zn(2+)</name>
        <dbReference type="ChEBI" id="CHEBI:29105"/>
    </ligand>
</feature>
<feature type="binding site" evidence="1">
    <location>
        <position position="169"/>
    </location>
    <ligand>
        <name>Zn(2+)</name>
        <dbReference type="ChEBI" id="CHEBI:29105"/>
    </ligand>
</feature>
<name>GCH1_SYNE7</name>
<proteinExistence type="inferred from homology"/>